<comment type="function">
    <text>Cytochromes P450 are a group of heme-thiolate monooxygenases. In liver microsomes, this enzyme is involved in an NADPH-dependent electron transport pathway. It oxidizes a variety of structurally unrelated compounds, including steroids, fatty acids, and xenobiotics.</text>
</comment>
<comment type="catalytic activity">
    <reaction>
        <text>an organic molecule + reduced [NADPH--hemoprotein reductase] + O2 = an alcohol + oxidized [NADPH--hemoprotein reductase] + H2O + H(+)</text>
        <dbReference type="Rhea" id="RHEA:17149"/>
        <dbReference type="Rhea" id="RHEA-COMP:11964"/>
        <dbReference type="Rhea" id="RHEA-COMP:11965"/>
        <dbReference type="ChEBI" id="CHEBI:15377"/>
        <dbReference type="ChEBI" id="CHEBI:15378"/>
        <dbReference type="ChEBI" id="CHEBI:15379"/>
        <dbReference type="ChEBI" id="CHEBI:30879"/>
        <dbReference type="ChEBI" id="CHEBI:57618"/>
        <dbReference type="ChEBI" id="CHEBI:58210"/>
        <dbReference type="ChEBI" id="CHEBI:142491"/>
        <dbReference type="EC" id="1.14.14.1"/>
    </reaction>
</comment>
<comment type="cofactor">
    <cofactor evidence="1">
        <name>heme</name>
        <dbReference type="ChEBI" id="CHEBI:30413"/>
    </cofactor>
</comment>
<comment type="subcellular location">
    <subcellularLocation>
        <location>Endoplasmic reticulum membrane</location>
        <topology>Peripheral membrane protein</topology>
    </subcellularLocation>
    <subcellularLocation>
        <location>Microsome membrane</location>
        <topology>Peripheral membrane protein</topology>
    </subcellularLocation>
</comment>
<comment type="induction">
    <text>P450 can be induced to high levels in liver and other tissues by various foreign compounds, including drugs, pesticides, and carcinogens.</text>
</comment>
<comment type="similarity">
    <text evidence="2">Belongs to the cytochrome P450 family.</text>
</comment>
<reference key="1">
    <citation type="journal article" date="1989" name="Biochemistry">
        <title>The CYP2D gene subfamily: analysis of the molecular basis of the debrisoquine 4-hydroxylase deficiency in DA rats.</title>
        <authorList>
            <person name="Matsunaga E."/>
            <person name="Zanger U.M."/>
            <person name="Hardwick J.P."/>
            <person name="Gelboin H.V."/>
            <person name="Meyer U.A."/>
            <person name="Gonzalez F.J."/>
        </authorList>
    </citation>
    <scope>NUCLEOTIDE SEQUENCE [MRNA]</scope>
</reference>
<reference key="2">
    <citation type="journal article" date="1990" name="J. Mol. Evol.">
        <title>The rat P450 IID subfamily: complete sequences of four closely linked genes and evidence that gene conversions maintained sequence homogeneity at the heme-binding region of the cytochrome P450 active site.</title>
        <authorList>
            <person name="Matsunaga E."/>
            <person name="Umeno M."/>
            <person name="Gonzalez F.J."/>
        </authorList>
    </citation>
    <scope>NUCLEOTIDE SEQUENCE [GENOMIC DNA]</scope>
    <source>
        <strain>Sprague-Dawley</strain>
        <tissue>Liver</tissue>
    </source>
</reference>
<reference key="3">
    <citation type="journal article" date="1997" name="Arch. Biochem. Biophys.">
        <title>Expression of four rat CYP2D isoforms in Saccharomyces cerevisiae and their catalytic specificity.</title>
        <authorList>
            <person name="Wan J."/>
            <person name="Imaoka S."/>
            <person name="Chow T."/>
            <person name="Hiroi T."/>
            <person name="Yabusaki Y."/>
            <person name="Funae Y."/>
        </authorList>
    </citation>
    <scope>NUCLEOTIDE SEQUENCE [GENOMIC DNA]</scope>
    <source>
        <strain>Sprague-Dawley</strain>
        <tissue>Liver</tissue>
    </source>
</reference>
<reference key="4">
    <citation type="journal article" date="2004" name="Genome Res.">
        <title>The status, quality, and expansion of the NIH full-length cDNA project: the Mammalian Gene Collection (MGC).</title>
        <authorList>
            <consortium name="The MGC Project Team"/>
        </authorList>
    </citation>
    <scope>NUCLEOTIDE SEQUENCE [LARGE SCALE MRNA]</scope>
    <source>
        <tissue>Liver</tissue>
    </source>
</reference>
<feature type="chain" id="PRO_0000051729" description="Cytochrome P450 2D3">
    <location>
        <begin position="1"/>
        <end position="500"/>
    </location>
</feature>
<feature type="binding site" description="axial binding residue">
    <location>
        <position position="446"/>
    </location>
    <ligand>
        <name>heme</name>
        <dbReference type="ChEBI" id="CHEBI:30413"/>
    </ligand>
    <ligandPart>
        <name>Fe</name>
        <dbReference type="ChEBI" id="CHEBI:18248"/>
    </ligandPart>
</feature>
<feature type="sequence conflict" description="In Ref. 1; AAA41002 and 2; CAA36270." evidence="2" ref="1 2">
    <original>AP</original>
    <variation>CT</variation>
    <location>
        <begin position="125"/>
        <end position="126"/>
    </location>
</feature>
<proteinExistence type="evidence at transcript level"/>
<accession>P12938</accession>
<accession>O35106</accession>
<accession>Q5FVU3</accession>
<organism>
    <name type="scientific">Rattus norvegicus</name>
    <name type="common">Rat</name>
    <dbReference type="NCBI Taxonomy" id="10116"/>
    <lineage>
        <taxon>Eukaryota</taxon>
        <taxon>Metazoa</taxon>
        <taxon>Chordata</taxon>
        <taxon>Craniata</taxon>
        <taxon>Vertebrata</taxon>
        <taxon>Euteleostomi</taxon>
        <taxon>Mammalia</taxon>
        <taxon>Eutheria</taxon>
        <taxon>Euarchontoglires</taxon>
        <taxon>Glires</taxon>
        <taxon>Rodentia</taxon>
        <taxon>Myomorpha</taxon>
        <taxon>Muroidea</taxon>
        <taxon>Muridae</taxon>
        <taxon>Murinae</taxon>
        <taxon>Rattus</taxon>
    </lineage>
</organism>
<name>CP2D3_RAT</name>
<evidence type="ECO:0000250" key="1"/>
<evidence type="ECO:0000305" key="2"/>
<dbReference type="EC" id="1.14.14.1"/>
<dbReference type="EMBL" id="J02868">
    <property type="protein sequence ID" value="AAA41002.1"/>
    <property type="molecule type" value="mRNA"/>
</dbReference>
<dbReference type="EMBL" id="X52028">
    <property type="protein sequence ID" value="CAA36270.1"/>
    <property type="molecule type" value="Genomic_DNA"/>
</dbReference>
<dbReference type="EMBL" id="AB008424">
    <property type="protein sequence ID" value="BAA23124.1"/>
    <property type="molecule type" value="mRNA"/>
</dbReference>
<dbReference type="EMBL" id="BC089769">
    <property type="protein sequence ID" value="AAH89769.1"/>
    <property type="molecule type" value="mRNA"/>
</dbReference>
<dbReference type="PIR" id="S16872">
    <property type="entry name" value="S16872"/>
</dbReference>
<dbReference type="RefSeq" id="NP_775116.1">
    <property type="nucleotide sequence ID" value="NM_173093.1"/>
</dbReference>
<dbReference type="SMR" id="P12938"/>
<dbReference type="FunCoup" id="P12938">
    <property type="interactions" value="50"/>
</dbReference>
<dbReference type="STRING" id="10116.ENSRNOP00000070699"/>
<dbReference type="BindingDB" id="P12938"/>
<dbReference type="ChEMBL" id="CHEMBL3057"/>
<dbReference type="iPTMnet" id="P12938"/>
<dbReference type="PhosphoSitePlus" id="P12938"/>
<dbReference type="PaxDb" id="10116-ENSRNOP00000048711"/>
<dbReference type="GeneID" id="24303"/>
<dbReference type="KEGG" id="rno:24303"/>
<dbReference type="UCSC" id="RGD:2472">
    <property type="organism name" value="rat"/>
</dbReference>
<dbReference type="AGR" id="RGD:2472"/>
<dbReference type="CTD" id="24303"/>
<dbReference type="RGD" id="2472">
    <property type="gene designation" value="Cyp2d3"/>
</dbReference>
<dbReference type="VEuPathDB" id="HostDB:ENSRNOG00000029179"/>
<dbReference type="eggNOG" id="KOG0156">
    <property type="taxonomic scope" value="Eukaryota"/>
</dbReference>
<dbReference type="HOGENOM" id="CLU_001570_22_0_1"/>
<dbReference type="InParanoid" id="P12938"/>
<dbReference type="OrthoDB" id="47901at9989"/>
<dbReference type="PhylomeDB" id="P12938"/>
<dbReference type="SABIO-RK" id="P12938"/>
<dbReference type="PRO" id="PR:P12938"/>
<dbReference type="Proteomes" id="UP000002494">
    <property type="component" value="Chromosome 7"/>
</dbReference>
<dbReference type="Bgee" id="ENSRNOG00000029179">
    <property type="expression patterns" value="Expressed in liver and 17 other cell types or tissues"/>
</dbReference>
<dbReference type="ExpressionAtlas" id="P12938">
    <property type="expression patterns" value="baseline and differential"/>
</dbReference>
<dbReference type="GO" id="GO:0005737">
    <property type="term" value="C:cytoplasm"/>
    <property type="evidence" value="ECO:0000318"/>
    <property type="project" value="GO_Central"/>
</dbReference>
<dbReference type="GO" id="GO:0005789">
    <property type="term" value="C:endoplasmic reticulum membrane"/>
    <property type="evidence" value="ECO:0007669"/>
    <property type="project" value="UniProtKB-SubCell"/>
</dbReference>
<dbReference type="GO" id="GO:0043231">
    <property type="term" value="C:intracellular membrane-bounded organelle"/>
    <property type="evidence" value="ECO:0000318"/>
    <property type="project" value="GO_Central"/>
</dbReference>
<dbReference type="GO" id="GO:0020037">
    <property type="term" value="F:heme binding"/>
    <property type="evidence" value="ECO:0000318"/>
    <property type="project" value="GO_Central"/>
</dbReference>
<dbReference type="GO" id="GO:0005506">
    <property type="term" value="F:iron ion binding"/>
    <property type="evidence" value="ECO:0007669"/>
    <property type="project" value="InterPro"/>
</dbReference>
<dbReference type="GO" id="GO:0004497">
    <property type="term" value="F:monooxygenase activity"/>
    <property type="evidence" value="ECO:0000314"/>
    <property type="project" value="RGD"/>
</dbReference>
<dbReference type="GO" id="GO:0016712">
    <property type="term" value="F:oxidoreductase activity, acting on paired donors, with incorporation or reduction of molecular oxygen, reduced flavin or flavoprotein as one donor, and incorporation of one atom of oxygen"/>
    <property type="evidence" value="ECO:0000318"/>
    <property type="project" value="GO_Central"/>
</dbReference>
<dbReference type="GO" id="GO:0019369">
    <property type="term" value="P:arachidonate metabolic process"/>
    <property type="evidence" value="ECO:0000318"/>
    <property type="project" value="GO_Central"/>
</dbReference>
<dbReference type="GO" id="GO:0001889">
    <property type="term" value="P:liver development"/>
    <property type="evidence" value="ECO:0000270"/>
    <property type="project" value="RGD"/>
</dbReference>
<dbReference type="GO" id="GO:0006805">
    <property type="term" value="P:xenobiotic metabolic process"/>
    <property type="evidence" value="ECO:0000318"/>
    <property type="project" value="GO_Central"/>
</dbReference>
<dbReference type="CDD" id="cd20663">
    <property type="entry name" value="CYP2D"/>
    <property type="match status" value="1"/>
</dbReference>
<dbReference type="FunFam" id="1.10.630.10:FF:000004">
    <property type="entry name" value="cytochrome P450 2D15 isoform X1"/>
    <property type="match status" value="1"/>
</dbReference>
<dbReference type="Gene3D" id="1.10.630.10">
    <property type="entry name" value="Cytochrome P450"/>
    <property type="match status" value="1"/>
</dbReference>
<dbReference type="InterPro" id="IPR001128">
    <property type="entry name" value="Cyt_P450"/>
</dbReference>
<dbReference type="InterPro" id="IPR017972">
    <property type="entry name" value="Cyt_P450_CS"/>
</dbReference>
<dbReference type="InterPro" id="IPR002401">
    <property type="entry name" value="Cyt_P450_E_grp-I"/>
</dbReference>
<dbReference type="InterPro" id="IPR008069">
    <property type="entry name" value="Cyt_P450_E_grp-I_CYP2D-like"/>
</dbReference>
<dbReference type="InterPro" id="IPR036396">
    <property type="entry name" value="Cyt_P450_sf"/>
</dbReference>
<dbReference type="InterPro" id="IPR050182">
    <property type="entry name" value="Cytochrome_P450_fam2"/>
</dbReference>
<dbReference type="PANTHER" id="PTHR24300:SF109">
    <property type="entry name" value="CYTOCHROME P450 2D26"/>
    <property type="match status" value="1"/>
</dbReference>
<dbReference type="PANTHER" id="PTHR24300">
    <property type="entry name" value="CYTOCHROME P450 508A4-RELATED"/>
    <property type="match status" value="1"/>
</dbReference>
<dbReference type="Pfam" id="PF00067">
    <property type="entry name" value="p450"/>
    <property type="match status" value="1"/>
</dbReference>
<dbReference type="PRINTS" id="PR00463">
    <property type="entry name" value="EP450I"/>
</dbReference>
<dbReference type="PRINTS" id="PR01686">
    <property type="entry name" value="EP450ICYP2D"/>
</dbReference>
<dbReference type="PRINTS" id="PR00385">
    <property type="entry name" value="P450"/>
</dbReference>
<dbReference type="SUPFAM" id="SSF48264">
    <property type="entry name" value="Cytochrome P450"/>
    <property type="match status" value="1"/>
</dbReference>
<dbReference type="PROSITE" id="PS00086">
    <property type="entry name" value="CYTOCHROME_P450"/>
    <property type="match status" value="1"/>
</dbReference>
<protein>
    <recommendedName>
        <fullName>Cytochrome P450 2D3</fullName>
        <ecNumber>1.14.14.1</ecNumber>
    </recommendedName>
    <alternativeName>
        <fullName>CYPIID3</fullName>
    </alternativeName>
    <alternativeName>
        <fullName>Cytochrome P450-DB3</fullName>
    </alternativeName>
    <alternativeName>
        <fullName>Debrisoquine 4-hydroxylase</fullName>
    </alternativeName>
</protein>
<sequence>MELLAGTGLWPMAIFTVIFILLVDLMHRRQRWTSRYPPGPVPWPVLGNLLQVDLCNMPYSMYKLQNRYGDVFSLQMGWKPVVVINGLKAVQELLVTCGEDTADRPEMPIFQHIGYGHKAKGVVLAPYGPEWREQRRFSVSTLRNFGVGKKSLEQWVTDEASHLCDALTAEAGRPLDPYTLLNKAVCNVIASLIYARRFDYGDPDFIKVLKILKESMGEQTGLFPEVLNMFPVLLRIPGLADKVFPGQKTFLTMVDNLVTEHKKTWDPDQPPRDLTDAFLAEIEKAKGNPESSFNDANLRLVVNDLFGAGMVTTSITLTWALLLMILHPDVQCRVQQEIDEVIGQVRHPEMADQAHMPFTNAVIHEVQRFADIVPMNLPHKTSRDIEVQGFLIPKGTTLIPNLSSVLKDETVWEKPLRFHPEHFLDAQGNFVKHEAFMPFSAGRRACLGEPLARMELFLFFTCLLQRFSFSVPTGQPRPSDYGVFAFLLSPSPYQLCAFKR</sequence>
<keyword id="KW-0256">Endoplasmic reticulum</keyword>
<keyword id="KW-0349">Heme</keyword>
<keyword id="KW-0408">Iron</keyword>
<keyword id="KW-0472">Membrane</keyword>
<keyword id="KW-0479">Metal-binding</keyword>
<keyword id="KW-0492">Microsome</keyword>
<keyword id="KW-0503">Monooxygenase</keyword>
<keyword id="KW-0560">Oxidoreductase</keyword>
<keyword id="KW-1185">Reference proteome</keyword>
<gene>
    <name type="primary">Cyp2d3</name>
    <name type="synonym">Cyp2d-3</name>
</gene>